<comment type="similarity">
    <text evidence="2">Belongs to the CFAP73 family.</text>
</comment>
<name>CCD42_MONBE</name>
<protein>
    <recommendedName>
        <fullName evidence="2">Coiled-coil domain-containing protein 42 homolog</fullName>
    </recommendedName>
</protein>
<keyword id="KW-0175">Coiled coil</keyword>
<keyword id="KW-1185">Reference proteome</keyword>
<sequence length="283" mass="33528">MAGLREFFKETVEEKLLQQMPDDVLQQTTPATQLLEKRRELEQVERALATQKEDFHVRMATLDQRKAELERKEYQLQESLLKFDRFLKENDARRERAEQKAASENEVAQAREEQVQNLRAELRSLQERKTRNRDILQRYSIFEAFMQTVLGEYPEYNEVQDVITRYKTLVATQQDLRSRDRNNQTEIERVRREMARYKEAHRVSMLDCSNKLATLRTAKERAHTETLYWENQLSAVQGAASKRTLLLGQIKMYAYPPAHPGTCPTRTWLALTREPRCCHEPPR</sequence>
<dbReference type="EMBL" id="CH991543">
    <property type="protein sequence ID" value="EDQ93073.1"/>
    <property type="molecule type" value="Genomic_DNA"/>
</dbReference>
<dbReference type="RefSeq" id="XP_001742835.1">
    <property type="nucleotide sequence ID" value="XM_001742783.1"/>
</dbReference>
<dbReference type="SMR" id="A9UQN0"/>
<dbReference type="FunCoup" id="A9UQN0">
    <property type="interactions" value="19"/>
</dbReference>
<dbReference type="STRING" id="81824.A9UQN0"/>
<dbReference type="EnsemblProtists" id="EDQ93073">
    <property type="protein sequence ID" value="EDQ93073"/>
    <property type="gene ID" value="MONBRDRAFT_30998"/>
</dbReference>
<dbReference type="KEGG" id="mbr:MONBRDRAFT_30998"/>
<dbReference type="eggNOG" id="ENOG502QRZS">
    <property type="taxonomic scope" value="Eukaryota"/>
</dbReference>
<dbReference type="InParanoid" id="A9UQN0"/>
<dbReference type="OMA" id="VEEHQSM"/>
<dbReference type="Proteomes" id="UP000001357">
    <property type="component" value="Unassembled WGS sequence"/>
</dbReference>
<dbReference type="GO" id="GO:0005856">
    <property type="term" value="C:cytoskeleton"/>
    <property type="evidence" value="ECO:0007669"/>
    <property type="project" value="UniProtKB-ARBA"/>
</dbReference>
<dbReference type="InterPro" id="IPR051147">
    <property type="entry name" value="CFAP_domain-containing"/>
</dbReference>
<dbReference type="InterPro" id="IPR025252">
    <property type="entry name" value="DUF4200"/>
</dbReference>
<dbReference type="PANTHER" id="PTHR21683:SF2">
    <property type="entry name" value="COILED-COIL DOMAIN-CONTAINING PROTEIN 42 LIKE-2-LIKE"/>
    <property type="match status" value="1"/>
</dbReference>
<dbReference type="PANTHER" id="PTHR21683">
    <property type="entry name" value="COILED-COIL DOMAIN-CONTAINING PROTEIN 42 LIKE-2-LIKE-RELATED"/>
    <property type="match status" value="1"/>
</dbReference>
<dbReference type="Pfam" id="PF13863">
    <property type="entry name" value="DUF4200"/>
    <property type="match status" value="1"/>
</dbReference>
<feature type="chain" id="PRO_0000343718" description="Coiled-coil domain-containing protein 42 homolog">
    <location>
        <begin position="1"/>
        <end position="283"/>
    </location>
</feature>
<feature type="coiled-coil region" evidence="1">
    <location>
        <begin position="31"/>
        <end position="139"/>
    </location>
</feature>
<feature type="coiled-coil region" evidence="1">
    <location>
        <begin position="174"/>
        <end position="204"/>
    </location>
</feature>
<organism>
    <name type="scientific">Monosiga brevicollis</name>
    <name type="common">Choanoflagellate</name>
    <dbReference type="NCBI Taxonomy" id="81824"/>
    <lineage>
        <taxon>Eukaryota</taxon>
        <taxon>Choanoflagellata</taxon>
        <taxon>Craspedida</taxon>
        <taxon>Salpingoecidae</taxon>
        <taxon>Monosiga</taxon>
    </lineage>
</organism>
<gene>
    <name type="ORF">30998</name>
</gene>
<proteinExistence type="inferred from homology"/>
<reference key="1">
    <citation type="journal article" date="2008" name="Nature">
        <title>The genome of the choanoflagellate Monosiga brevicollis and the origin of metazoans.</title>
        <authorList>
            <consortium name="JGI Sequencing"/>
            <person name="King N."/>
            <person name="Westbrook M.J."/>
            <person name="Young S.L."/>
            <person name="Kuo A."/>
            <person name="Abedin M."/>
            <person name="Chapman J."/>
            <person name="Fairclough S."/>
            <person name="Hellsten U."/>
            <person name="Isogai Y."/>
            <person name="Letunic I."/>
            <person name="Marr M."/>
            <person name="Pincus D."/>
            <person name="Putnam N."/>
            <person name="Rokas A."/>
            <person name="Wright K.J."/>
            <person name="Zuzow R."/>
            <person name="Dirks W."/>
            <person name="Good M."/>
            <person name="Goodstein D."/>
            <person name="Lemons D."/>
            <person name="Li W."/>
            <person name="Lyons J.B."/>
            <person name="Morris A."/>
            <person name="Nichols S."/>
            <person name="Richter D.J."/>
            <person name="Salamov A."/>
            <person name="Bork P."/>
            <person name="Lim W.A."/>
            <person name="Manning G."/>
            <person name="Miller W.T."/>
            <person name="McGinnis W."/>
            <person name="Shapiro H."/>
            <person name="Tjian R."/>
            <person name="Grigoriev I.V."/>
            <person name="Rokhsar D."/>
        </authorList>
    </citation>
    <scope>NUCLEOTIDE SEQUENCE [LARGE SCALE GENOMIC DNA]</scope>
    <source>
        <strain>MX1 / ATCC 50154</strain>
    </source>
</reference>
<evidence type="ECO:0000255" key="1"/>
<evidence type="ECO:0000305" key="2"/>
<accession>A9UQN0</accession>